<accession>B1H056</accession>
<sequence length="186" mass="21038">MHTQSFFSAAEEVMKRTIDRLKCELSSIRTGRVNSAAIETIKVESYGSIMPINQIASISVSDARTIEIRPWDVSQLSAIEKAILKADIGMSPANDGKLIRVSVPHLTQERRKEIAKSIGKMAEEFRVAIRNERRVLVENIKKLEKDKVITEDDKKKLEVEAQKVTDGYIKKIDDSIVVKEKEVMQV</sequence>
<protein>
    <recommendedName>
        <fullName evidence="1">Ribosome-recycling factor</fullName>
        <shortName evidence="1">RRF</shortName>
    </recommendedName>
    <alternativeName>
        <fullName evidence="1">Ribosome-releasing factor</fullName>
    </alternativeName>
</protein>
<gene>
    <name evidence="1" type="primary">frr</name>
    <name type="ordered locus">TGRD_405</name>
</gene>
<keyword id="KW-0963">Cytoplasm</keyword>
<keyword id="KW-0648">Protein biosynthesis</keyword>
<organism>
    <name type="scientific">Endomicrobium trichonymphae</name>
    <dbReference type="NCBI Taxonomy" id="1408204"/>
    <lineage>
        <taxon>Bacteria</taxon>
        <taxon>Pseudomonadati</taxon>
        <taxon>Elusimicrobiota</taxon>
        <taxon>Endomicrobiia</taxon>
        <taxon>Endomicrobiales</taxon>
        <taxon>Endomicrobiaceae</taxon>
        <taxon>Candidatus Endomicrobiellum</taxon>
    </lineage>
</organism>
<evidence type="ECO:0000255" key="1">
    <source>
        <dbReference type="HAMAP-Rule" id="MF_00040"/>
    </source>
</evidence>
<name>RRF_ENDTX</name>
<comment type="function">
    <text evidence="1">Responsible for the release of ribosomes from messenger RNA at the termination of protein biosynthesis. May increase the efficiency of translation by recycling ribosomes from one round of translation to another.</text>
</comment>
<comment type="subcellular location">
    <subcellularLocation>
        <location evidence="1">Cytoplasm</location>
    </subcellularLocation>
</comment>
<comment type="similarity">
    <text evidence="1">Belongs to the RRF family.</text>
</comment>
<dbReference type="EMBL" id="AP009510">
    <property type="protein sequence ID" value="BAG13888.1"/>
    <property type="molecule type" value="Genomic_DNA"/>
</dbReference>
<dbReference type="RefSeq" id="WP_015423414.1">
    <property type="nucleotide sequence ID" value="NC_020419.1"/>
</dbReference>
<dbReference type="SMR" id="B1H056"/>
<dbReference type="STRING" id="471821.TGRD_405"/>
<dbReference type="KEGG" id="rsd:TGRD_405"/>
<dbReference type="PATRIC" id="fig|471821.5.peg.658"/>
<dbReference type="HOGENOM" id="CLU_073981_2_0_0"/>
<dbReference type="Proteomes" id="UP000001691">
    <property type="component" value="Chromosome"/>
</dbReference>
<dbReference type="GO" id="GO:0005737">
    <property type="term" value="C:cytoplasm"/>
    <property type="evidence" value="ECO:0007669"/>
    <property type="project" value="UniProtKB-SubCell"/>
</dbReference>
<dbReference type="GO" id="GO:0043023">
    <property type="term" value="F:ribosomal large subunit binding"/>
    <property type="evidence" value="ECO:0007669"/>
    <property type="project" value="TreeGrafter"/>
</dbReference>
<dbReference type="GO" id="GO:0006415">
    <property type="term" value="P:translational termination"/>
    <property type="evidence" value="ECO:0007669"/>
    <property type="project" value="UniProtKB-UniRule"/>
</dbReference>
<dbReference type="CDD" id="cd00520">
    <property type="entry name" value="RRF"/>
    <property type="match status" value="1"/>
</dbReference>
<dbReference type="FunFam" id="1.10.132.20:FF:000001">
    <property type="entry name" value="Ribosome-recycling factor"/>
    <property type="match status" value="1"/>
</dbReference>
<dbReference type="FunFam" id="3.30.1360.40:FF:000001">
    <property type="entry name" value="Ribosome-recycling factor"/>
    <property type="match status" value="1"/>
</dbReference>
<dbReference type="Gene3D" id="3.30.1360.40">
    <property type="match status" value="1"/>
</dbReference>
<dbReference type="Gene3D" id="1.10.132.20">
    <property type="entry name" value="Ribosome-recycling factor"/>
    <property type="match status" value="1"/>
</dbReference>
<dbReference type="HAMAP" id="MF_00040">
    <property type="entry name" value="RRF"/>
    <property type="match status" value="1"/>
</dbReference>
<dbReference type="InterPro" id="IPR002661">
    <property type="entry name" value="Ribosome_recyc_fac"/>
</dbReference>
<dbReference type="InterPro" id="IPR023584">
    <property type="entry name" value="Ribosome_recyc_fac_dom"/>
</dbReference>
<dbReference type="InterPro" id="IPR036191">
    <property type="entry name" value="RRF_sf"/>
</dbReference>
<dbReference type="NCBIfam" id="TIGR00496">
    <property type="entry name" value="frr"/>
    <property type="match status" value="1"/>
</dbReference>
<dbReference type="PANTHER" id="PTHR20982:SF3">
    <property type="entry name" value="MITOCHONDRIAL RIBOSOME RECYCLING FACTOR PSEUDO 1"/>
    <property type="match status" value="1"/>
</dbReference>
<dbReference type="PANTHER" id="PTHR20982">
    <property type="entry name" value="RIBOSOME RECYCLING FACTOR"/>
    <property type="match status" value="1"/>
</dbReference>
<dbReference type="Pfam" id="PF01765">
    <property type="entry name" value="RRF"/>
    <property type="match status" value="1"/>
</dbReference>
<dbReference type="SUPFAM" id="SSF55194">
    <property type="entry name" value="Ribosome recycling factor, RRF"/>
    <property type="match status" value="1"/>
</dbReference>
<proteinExistence type="inferred from homology"/>
<feature type="chain" id="PRO_1000117265" description="Ribosome-recycling factor">
    <location>
        <begin position="1"/>
        <end position="186"/>
    </location>
</feature>
<reference key="1">
    <citation type="journal article" date="2008" name="Proc. Natl. Acad. Sci. U.S.A.">
        <title>Complete genome of the uncultured termite group 1 bacteria in a single host protist cell.</title>
        <authorList>
            <person name="Hongoh Y."/>
            <person name="Sharma V.K."/>
            <person name="Prakash T."/>
            <person name="Noda S."/>
            <person name="Taylor T.D."/>
            <person name="Kudo T."/>
            <person name="Sakaki Y."/>
            <person name="Toyoda A."/>
            <person name="Hattori M."/>
            <person name="Ohkuma M."/>
        </authorList>
    </citation>
    <scope>NUCLEOTIDE SEQUENCE [LARGE SCALE GENOMIC DNA]</scope>
</reference>